<gene>
    <name evidence="1" type="primary">rplT</name>
    <name type="ordered locus">BamMC406_1402</name>
</gene>
<organism>
    <name type="scientific">Burkholderia ambifaria (strain MC40-6)</name>
    <dbReference type="NCBI Taxonomy" id="398577"/>
    <lineage>
        <taxon>Bacteria</taxon>
        <taxon>Pseudomonadati</taxon>
        <taxon>Pseudomonadota</taxon>
        <taxon>Betaproteobacteria</taxon>
        <taxon>Burkholderiales</taxon>
        <taxon>Burkholderiaceae</taxon>
        <taxon>Burkholderia</taxon>
        <taxon>Burkholderia cepacia complex</taxon>
    </lineage>
</organism>
<dbReference type="EMBL" id="CP001025">
    <property type="protein sequence ID" value="ACB63890.1"/>
    <property type="molecule type" value="Genomic_DNA"/>
</dbReference>
<dbReference type="RefSeq" id="WP_006052502.1">
    <property type="nucleotide sequence ID" value="NC_010551.1"/>
</dbReference>
<dbReference type="SMR" id="B1YP16"/>
<dbReference type="GeneID" id="97310577"/>
<dbReference type="KEGG" id="bac:BamMC406_1402"/>
<dbReference type="HOGENOM" id="CLU_123265_0_1_4"/>
<dbReference type="OrthoDB" id="9808966at2"/>
<dbReference type="Proteomes" id="UP000001680">
    <property type="component" value="Chromosome 1"/>
</dbReference>
<dbReference type="GO" id="GO:1990904">
    <property type="term" value="C:ribonucleoprotein complex"/>
    <property type="evidence" value="ECO:0007669"/>
    <property type="project" value="UniProtKB-KW"/>
</dbReference>
<dbReference type="GO" id="GO:0005840">
    <property type="term" value="C:ribosome"/>
    <property type="evidence" value="ECO:0007669"/>
    <property type="project" value="UniProtKB-KW"/>
</dbReference>
<dbReference type="GO" id="GO:0019843">
    <property type="term" value="F:rRNA binding"/>
    <property type="evidence" value="ECO:0007669"/>
    <property type="project" value="UniProtKB-UniRule"/>
</dbReference>
<dbReference type="GO" id="GO:0003735">
    <property type="term" value="F:structural constituent of ribosome"/>
    <property type="evidence" value="ECO:0007669"/>
    <property type="project" value="InterPro"/>
</dbReference>
<dbReference type="GO" id="GO:0000027">
    <property type="term" value="P:ribosomal large subunit assembly"/>
    <property type="evidence" value="ECO:0007669"/>
    <property type="project" value="UniProtKB-UniRule"/>
</dbReference>
<dbReference type="GO" id="GO:0006412">
    <property type="term" value="P:translation"/>
    <property type="evidence" value="ECO:0007669"/>
    <property type="project" value="InterPro"/>
</dbReference>
<dbReference type="CDD" id="cd07026">
    <property type="entry name" value="Ribosomal_L20"/>
    <property type="match status" value="1"/>
</dbReference>
<dbReference type="FunFam" id="1.10.1900.20:FF:000001">
    <property type="entry name" value="50S ribosomal protein L20"/>
    <property type="match status" value="1"/>
</dbReference>
<dbReference type="Gene3D" id="6.10.160.10">
    <property type="match status" value="1"/>
</dbReference>
<dbReference type="Gene3D" id="1.10.1900.20">
    <property type="entry name" value="Ribosomal protein L20"/>
    <property type="match status" value="1"/>
</dbReference>
<dbReference type="HAMAP" id="MF_00382">
    <property type="entry name" value="Ribosomal_bL20"/>
    <property type="match status" value="1"/>
</dbReference>
<dbReference type="InterPro" id="IPR005813">
    <property type="entry name" value="Ribosomal_bL20"/>
</dbReference>
<dbReference type="InterPro" id="IPR049946">
    <property type="entry name" value="RIBOSOMAL_L20_CS"/>
</dbReference>
<dbReference type="InterPro" id="IPR035566">
    <property type="entry name" value="Ribosomal_protein_bL20_C"/>
</dbReference>
<dbReference type="NCBIfam" id="TIGR01032">
    <property type="entry name" value="rplT_bact"/>
    <property type="match status" value="1"/>
</dbReference>
<dbReference type="PANTHER" id="PTHR10986">
    <property type="entry name" value="39S RIBOSOMAL PROTEIN L20"/>
    <property type="match status" value="1"/>
</dbReference>
<dbReference type="Pfam" id="PF00453">
    <property type="entry name" value="Ribosomal_L20"/>
    <property type="match status" value="1"/>
</dbReference>
<dbReference type="PRINTS" id="PR00062">
    <property type="entry name" value="RIBOSOMALL20"/>
</dbReference>
<dbReference type="SUPFAM" id="SSF74731">
    <property type="entry name" value="Ribosomal protein L20"/>
    <property type="match status" value="1"/>
</dbReference>
<dbReference type="PROSITE" id="PS00937">
    <property type="entry name" value="RIBOSOMAL_L20"/>
    <property type="match status" value="1"/>
</dbReference>
<sequence>MPRVKRGVTARARHKKIIKLAKGYRGRRNNVYRIAKQAVMRAGQYAYRDRRNKKRVFRALWITRINAAVRQHDMTYSVFINGLKKASIELDRKVLADMAVFDKAAFAAIVQQVKAAVAA</sequence>
<name>RL20_BURA4</name>
<proteinExistence type="inferred from homology"/>
<comment type="function">
    <text evidence="1">Binds directly to 23S ribosomal RNA and is necessary for the in vitro assembly process of the 50S ribosomal subunit. It is not involved in the protein synthesizing functions of that subunit.</text>
</comment>
<comment type="similarity">
    <text evidence="1">Belongs to the bacterial ribosomal protein bL20 family.</text>
</comment>
<reference key="1">
    <citation type="submission" date="2008-04" db="EMBL/GenBank/DDBJ databases">
        <title>Complete sequence of chromosome 1 of Burkholderia ambifaria MC40-6.</title>
        <authorList>
            <person name="Copeland A."/>
            <person name="Lucas S."/>
            <person name="Lapidus A."/>
            <person name="Glavina del Rio T."/>
            <person name="Dalin E."/>
            <person name="Tice H."/>
            <person name="Pitluck S."/>
            <person name="Chain P."/>
            <person name="Malfatti S."/>
            <person name="Shin M."/>
            <person name="Vergez L."/>
            <person name="Lang D."/>
            <person name="Schmutz J."/>
            <person name="Larimer F."/>
            <person name="Land M."/>
            <person name="Hauser L."/>
            <person name="Kyrpides N."/>
            <person name="Lykidis A."/>
            <person name="Ramette A."/>
            <person name="Konstantinidis K."/>
            <person name="Tiedje J."/>
            <person name="Richardson P."/>
        </authorList>
    </citation>
    <scope>NUCLEOTIDE SEQUENCE [LARGE SCALE GENOMIC DNA]</scope>
    <source>
        <strain>MC40-6</strain>
    </source>
</reference>
<feature type="chain" id="PRO_1000122282" description="Large ribosomal subunit protein bL20">
    <location>
        <begin position="1"/>
        <end position="119"/>
    </location>
</feature>
<accession>B1YP16</accession>
<evidence type="ECO:0000255" key="1">
    <source>
        <dbReference type="HAMAP-Rule" id="MF_00382"/>
    </source>
</evidence>
<evidence type="ECO:0000305" key="2"/>
<protein>
    <recommendedName>
        <fullName evidence="1">Large ribosomal subunit protein bL20</fullName>
    </recommendedName>
    <alternativeName>
        <fullName evidence="2">50S ribosomal protein L20</fullName>
    </alternativeName>
</protein>
<keyword id="KW-0687">Ribonucleoprotein</keyword>
<keyword id="KW-0689">Ribosomal protein</keyword>
<keyword id="KW-0694">RNA-binding</keyword>
<keyword id="KW-0699">rRNA-binding</keyword>